<sequence length="79" mass="8682">MIFTPFLPPADLSVFQNVKGPQKDPEELVAVSDTAEDPSSGTGLPREPALLRGSWRSRFQRALACFIKCFRGGYRALGI</sequence>
<reference key="1">
    <citation type="journal article" date="2005" name="Nature">
        <title>The DNA sequence of the human X chromosome.</title>
        <authorList>
            <person name="Ross M.T."/>
            <person name="Grafham D.V."/>
            <person name="Coffey A.J."/>
            <person name="Scherer S."/>
            <person name="McLay K."/>
            <person name="Muzny D."/>
            <person name="Platzer M."/>
            <person name="Howell G.R."/>
            <person name="Burrows C."/>
            <person name="Bird C.P."/>
            <person name="Frankish A."/>
            <person name="Lovell F.L."/>
            <person name="Howe K.L."/>
            <person name="Ashurst J.L."/>
            <person name="Fulton R.S."/>
            <person name="Sudbrak R."/>
            <person name="Wen G."/>
            <person name="Jones M.C."/>
            <person name="Hurles M.E."/>
            <person name="Andrews T.D."/>
            <person name="Scott C.E."/>
            <person name="Searle S."/>
            <person name="Ramser J."/>
            <person name="Whittaker A."/>
            <person name="Deadman R."/>
            <person name="Carter N.P."/>
            <person name="Hunt S.E."/>
            <person name="Chen R."/>
            <person name="Cree A."/>
            <person name="Gunaratne P."/>
            <person name="Havlak P."/>
            <person name="Hodgson A."/>
            <person name="Metzker M.L."/>
            <person name="Richards S."/>
            <person name="Scott G."/>
            <person name="Steffen D."/>
            <person name="Sodergren E."/>
            <person name="Wheeler D.A."/>
            <person name="Worley K.C."/>
            <person name="Ainscough R."/>
            <person name="Ambrose K.D."/>
            <person name="Ansari-Lari M.A."/>
            <person name="Aradhya S."/>
            <person name="Ashwell R.I."/>
            <person name="Babbage A.K."/>
            <person name="Bagguley C.L."/>
            <person name="Ballabio A."/>
            <person name="Banerjee R."/>
            <person name="Barker G.E."/>
            <person name="Barlow K.F."/>
            <person name="Barrett I.P."/>
            <person name="Bates K.N."/>
            <person name="Beare D.M."/>
            <person name="Beasley H."/>
            <person name="Beasley O."/>
            <person name="Beck A."/>
            <person name="Bethel G."/>
            <person name="Blechschmidt K."/>
            <person name="Brady N."/>
            <person name="Bray-Allen S."/>
            <person name="Bridgeman A.M."/>
            <person name="Brown A.J."/>
            <person name="Brown M.J."/>
            <person name="Bonnin D."/>
            <person name="Bruford E.A."/>
            <person name="Buhay C."/>
            <person name="Burch P."/>
            <person name="Burford D."/>
            <person name="Burgess J."/>
            <person name="Burrill W."/>
            <person name="Burton J."/>
            <person name="Bye J.M."/>
            <person name="Carder C."/>
            <person name="Carrel L."/>
            <person name="Chako J."/>
            <person name="Chapman J.C."/>
            <person name="Chavez D."/>
            <person name="Chen E."/>
            <person name="Chen G."/>
            <person name="Chen Y."/>
            <person name="Chen Z."/>
            <person name="Chinault C."/>
            <person name="Ciccodicola A."/>
            <person name="Clark S.Y."/>
            <person name="Clarke G."/>
            <person name="Clee C.M."/>
            <person name="Clegg S."/>
            <person name="Clerc-Blankenburg K."/>
            <person name="Clifford K."/>
            <person name="Cobley V."/>
            <person name="Cole C.G."/>
            <person name="Conquer J.S."/>
            <person name="Corby N."/>
            <person name="Connor R.E."/>
            <person name="David R."/>
            <person name="Davies J."/>
            <person name="Davis C."/>
            <person name="Davis J."/>
            <person name="Delgado O."/>
            <person name="Deshazo D."/>
            <person name="Dhami P."/>
            <person name="Ding Y."/>
            <person name="Dinh H."/>
            <person name="Dodsworth S."/>
            <person name="Draper H."/>
            <person name="Dugan-Rocha S."/>
            <person name="Dunham A."/>
            <person name="Dunn M."/>
            <person name="Durbin K.J."/>
            <person name="Dutta I."/>
            <person name="Eades T."/>
            <person name="Ellwood M."/>
            <person name="Emery-Cohen A."/>
            <person name="Errington H."/>
            <person name="Evans K.L."/>
            <person name="Faulkner L."/>
            <person name="Francis F."/>
            <person name="Frankland J."/>
            <person name="Fraser A.E."/>
            <person name="Galgoczy P."/>
            <person name="Gilbert J."/>
            <person name="Gill R."/>
            <person name="Gloeckner G."/>
            <person name="Gregory S.G."/>
            <person name="Gribble S."/>
            <person name="Griffiths C."/>
            <person name="Grocock R."/>
            <person name="Gu Y."/>
            <person name="Gwilliam R."/>
            <person name="Hamilton C."/>
            <person name="Hart E.A."/>
            <person name="Hawes A."/>
            <person name="Heath P.D."/>
            <person name="Heitmann K."/>
            <person name="Hennig S."/>
            <person name="Hernandez J."/>
            <person name="Hinzmann B."/>
            <person name="Ho S."/>
            <person name="Hoffs M."/>
            <person name="Howden P.J."/>
            <person name="Huckle E.J."/>
            <person name="Hume J."/>
            <person name="Hunt P.J."/>
            <person name="Hunt A.R."/>
            <person name="Isherwood J."/>
            <person name="Jacob L."/>
            <person name="Johnson D."/>
            <person name="Jones S."/>
            <person name="de Jong P.J."/>
            <person name="Joseph S.S."/>
            <person name="Keenan S."/>
            <person name="Kelly S."/>
            <person name="Kershaw J.K."/>
            <person name="Khan Z."/>
            <person name="Kioschis P."/>
            <person name="Klages S."/>
            <person name="Knights A.J."/>
            <person name="Kosiura A."/>
            <person name="Kovar-Smith C."/>
            <person name="Laird G.K."/>
            <person name="Langford C."/>
            <person name="Lawlor S."/>
            <person name="Leversha M."/>
            <person name="Lewis L."/>
            <person name="Liu W."/>
            <person name="Lloyd C."/>
            <person name="Lloyd D.M."/>
            <person name="Loulseged H."/>
            <person name="Loveland J.E."/>
            <person name="Lovell J.D."/>
            <person name="Lozado R."/>
            <person name="Lu J."/>
            <person name="Lyne R."/>
            <person name="Ma J."/>
            <person name="Maheshwari M."/>
            <person name="Matthews L.H."/>
            <person name="McDowall J."/>
            <person name="McLaren S."/>
            <person name="McMurray A."/>
            <person name="Meidl P."/>
            <person name="Meitinger T."/>
            <person name="Milne S."/>
            <person name="Miner G."/>
            <person name="Mistry S.L."/>
            <person name="Morgan M."/>
            <person name="Morris S."/>
            <person name="Mueller I."/>
            <person name="Mullikin J.C."/>
            <person name="Nguyen N."/>
            <person name="Nordsiek G."/>
            <person name="Nyakatura G."/>
            <person name="O'dell C.N."/>
            <person name="Okwuonu G."/>
            <person name="Palmer S."/>
            <person name="Pandian R."/>
            <person name="Parker D."/>
            <person name="Parrish J."/>
            <person name="Pasternak S."/>
            <person name="Patel D."/>
            <person name="Pearce A.V."/>
            <person name="Pearson D.M."/>
            <person name="Pelan S.E."/>
            <person name="Perez L."/>
            <person name="Porter K.M."/>
            <person name="Ramsey Y."/>
            <person name="Reichwald K."/>
            <person name="Rhodes S."/>
            <person name="Ridler K.A."/>
            <person name="Schlessinger D."/>
            <person name="Schueler M.G."/>
            <person name="Sehra H.K."/>
            <person name="Shaw-Smith C."/>
            <person name="Shen H."/>
            <person name="Sheridan E.M."/>
            <person name="Shownkeen R."/>
            <person name="Skuce C.D."/>
            <person name="Smith M.L."/>
            <person name="Sotheran E.C."/>
            <person name="Steingruber H.E."/>
            <person name="Steward C.A."/>
            <person name="Storey R."/>
            <person name="Swann R.M."/>
            <person name="Swarbreck D."/>
            <person name="Tabor P.E."/>
            <person name="Taudien S."/>
            <person name="Taylor T."/>
            <person name="Teague B."/>
            <person name="Thomas K."/>
            <person name="Thorpe A."/>
            <person name="Timms K."/>
            <person name="Tracey A."/>
            <person name="Trevanion S."/>
            <person name="Tromans A.C."/>
            <person name="d'Urso M."/>
            <person name="Verduzco D."/>
            <person name="Villasana D."/>
            <person name="Waldron L."/>
            <person name="Wall M."/>
            <person name="Wang Q."/>
            <person name="Warren J."/>
            <person name="Warry G.L."/>
            <person name="Wei X."/>
            <person name="West A."/>
            <person name="Whitehead S.L."/>
            <person name="Whiteley M.N."/>
            <person name="Wilkinson J.E."/>
            <person name="Willey D.L."/>
            <person name="Williams G."/>
            <person name="Williams L."/>
            <person name="Williamson A."/>
            <person name="Williamson H."/>
            <person name="Wilming L."/>
            <person name="Woodmansey R.L."/>
            <person name="Wray P.W."/>
            <person name="Yen J."/>
            <person name="Zhang J."/>
            <person name="Zhou J."/>
            <person name="Zoghbi H."/>
            <person name="Zorilla S."/>
            <person name="Buck D."/>
            <person name="Reinhardt R."/>
            <person name="Poustka A."/>
            <person name="Rosenthal A."/>
            <person name="Lehrach H."/>
            <person name="Meindl A."/>
            <person name="Minx P.J."/>
            <person name="Hillier L.W."/>
            <person name="Willard H.F."/>
            <person name="Wilson R.K."/>
            <person name="Waterston R.H."/>
            <person name="Rice C.M."/>
            <person name="Vaudin M."/>
            <person name="Coulson A."/>
            <person name="Nelson D.L."/>
            <person name="Weinstock G."/>
            <person name="Sulston J.E."/>
            <person name="Durbin R.M."/>
            <person name="Hubbard T."/>
            <person name="Gibbs R.A."/>
            <person name="Beck S."/>
            <person name="Rogers J."/>
            <person name="Bentley D.R."/>
        </authorList>
    </citation>
    <scope>NUCLEOTIDE SEQUENCE [LARGE SCALE GENOMIC DNA]</scope>
</reference>
<proteinExistence type="inferred from homology"/>
<comment type="similarity">
    <text evidence="2">Belongs to the FAM236 family.</text>
</comment>
<dbReference type="EMBL" id="AC234776">
    <property type="status" value="NOT_ANNOTATED_CDS"/>
    <property type="molecule type" value="Genomic_DNA"/>
</dbReference>
<dbReference type="CCDS" id="CCDS87763.1"/>
<dbReference type="RefSeq" id="NP_001335132.1">
    <property type="nucleotide sequence ID" value="NM_001348203.1"/>
</dbReference>
<dbReference type="RefSeq" id="NP_001338040.1">
    <property type="nucleotide sequence ID" value="NM_001351111.1"/>
</dbReference>
<dbReference type="BioMuta" id="FAM236C"/>
<dbReference type="MassIVE" id="P0DP71"/>
<dbReference type="PeptideAtlas" id="P0DP71"/>
<dbReference type="DNASU" id="105373251"/>
<dbReference type="Ensembl" id="ENST00000636267.1">
    <property type="protein sequence ID" value="ENSP00000490543.1"/>
    <property type="gene ID" value="ENSG00000283594.1"/>
</dbReference>
<dbReference type="GeneID" id="105373251"/>
<dbReference type="GeneID" id="109729126"/>
<dbReference type="KEGG" id="hsa:105373251"/>
<dbReference type="MANE-Select" id="ENST00000636267.1">
    <property type="protein sequence ID" value="ENSP00000490543.1"/>
    <property type="RefSeq nucleotide sequence ID" value="NM_001351111.1"/>
    <property type="RefSeq protein sequence ID" value="NP_001338040.1"/>
</dbReference>
<dbReference type="AGR" id="HGNC:52641"/>
<dbReference type="AGR" id="HGNC:52642"/>
<dbReference type="CTD" id="105373251"/>
<dbReference type="GeneCards" id="FAM236C"/>
<dbReference type="HGNC" id="HGNC:52641">
    <property type="gene designation" value="FAM236C"/>
</dbReference>
<dbReference type="HPA" id="ENSG00000283594">
    <property type="expression patterns" value="Tissue enriched (testis)"/>
</dbReference>
<dbReference type="neXtProt" id="NX_P0DP71"/>
<dbReference type="VEuPathDB" id="HostDB:ENSG00000283594"/>
<dbReference type="GeneTree" id="ENSGT00410000029400"/>
<dbReference type="InParanoid" id="P0DP71"/>
<dbReference type="OMA" id="GTGWFRE"/>
<dbReference type="OrthoDB" id="9538021at2759"/>
<dbReference type="PAN-GO" id="P0DP71">
    <property type="GO annotations" value="0 GO annotations based on evolutionary models"/>
</dbReference>
<dbReference type="Pharos" id="P0DP71">
    <property type="development level" value="Tdark"/>
</dbReference>
<dbReference type="PRO" id="PR:P0DP71"/>
<dbReference type="Proteomes" id="UP000005640">
    <property type="component" value="Chromosome X"/>
</dbReference>
<dbReference type="RNAct" id="P0DP71">
    <property type="molecule type" value="protein"/>
</dbReference>
<dbReference type="Bgee" id="ENSG00000283594">
    <property type="expression patterns" value="Expressed in male germ line stem cell (sensu Vertebrata) in testis and 9 other cell types or tissues"/>
</dbReference>
<dbReference type="ExpressionAtlas" id="P0DP71">
    <property type="expression patterns" value="baseline"/>
</dbReference>
<keyword id="KW-1185">Reference proteome</keyword>
<organism>
    <name type="scientific">Homo sapiens</name>
    <name type="common">Human</name>
    <dbReference type="NCBI Taxonomy" id="9606"/>
    <lineage>
        <taxon>Eukaryota</taxon>
        <taxon>Metazoa</taxon>
        <taxon>Chordata</taxon>
        <taxon>Craniata</taxon>
        <taxon>Vertebrata</taxon>
        <taxon>Euteleostomi</taxon>
        <taxon>Mammalia</taxon>
        <taxon>Eutheria</taxon>
        <taxon>Euarchontoglires</taxon>
        <taxon>Primates</taxon>
        <taxon>Haplorrhini</taxon>
        <taxon>Catarrhini</taxon>
        <taxon>Hominidae</taxon>
        <taxon>Homo</taxon>
    </lineage>
</organism>
<accession>P0DP71</accession>
<evidence type="ECO:0000256" key="1">
    <source>
        <dbReference type="SAM" id="MobiDB-lite"/>
    </source>
</evidence>
<evidence type="ECO:0000305" key="2"/>
<evidence type="ECO:0000312" key="3">
    <source>
        <dbReference type="HGNC" id="HGNC:52641"/>
    </source>
</evidence>
<gene>
    <name evidence="3" type="primary">FAM236C</name>
</gene>
<protein>
    <recommendedName>
        <fullName evidence="2">Protein FAM236C</fullName>
    </recommendedName>
</protein>
<name>F236C_HUMAN</name>
<feature type="chain" id="PRO_0000440959" description="Protein FAM236C">
    <location>
        <begin position="1"/>
        <end position="79"/>
    </location>
</feature>
<feature type="region of interest" description="Disordered" evidence="1">
    <location>
        <begin position="19"/>
        <end position="48"/>
    </location>
</feature>